<keyword id="KW-0002">3D-structure</keyword>
<keyword id="KW-0067">ATP-binding</keyword>
<keyword id="KW-0119">Carbohydrate metabolism</keyword>
<keyword id="KW-0418">Kinase</keyword>
<keyword id="KW-0479">Metal-binding</keyword>
<keyword id="KW-0547">Nucleotide-binding</keyword>
<keyword id="KW-0808">Transferase</keyword>
<keyword id="KW-0862">Zinc</keyword>
<reference key="1">
    <citation type="journal article" date="2005" name="J. Bacteriol.">
        <title>Genomic sequence of an otitis media isolate of nontypeable Haemophilus influenzae: comparative study with H. influenzae serotype d, strain KW20.</title>
        <authorList>
            <person name="Harrison A."/>
            <person name="Dyer D.W."/>
            <person name="Gillaspy A."/>
            <person name="Ray W.C."/>
            <person name="Mungur R."/>
            <person name="Carson M.B."/>
            <person name="Zhong H."/>
            <person name="Gipson J."/>
            <person name="Gipson M."/>
            <person name="Johnson L.S."/>
            <person name="Lewis L."/>
            <person name="Bakaletz L.O."/>
            <person name="Munson R.S. Jr."/>
        </authorList>
    </citation>
    <scope>NUCLEOTIDE SEQUENCE [LARGE SCALE GENOMIC DNA]</scope>
    <source>
        <strain>86-028NP</strain>
    </source>
</reference>
<evidence type="ECO:0000255" key="1">
    <source>
        <dbReference type="HAMAP-Rule" id="MF_01234"/>
    </source>
</evidence>
<evidence type="ECO:0007829" key="2">
    <source>
        <dbReference type="PDB" id="6JDB"/>
    </source>
</evidence>
<evidence type="ECO:0007829" key="3">
    <source>
        <dbReference type="PDB" id="6JDC"/>
    </source>
</evidence>
<accession>Q4QP43</accession>
<sequence length="300" mass="31964">MRCLALDIGGTKIAAAIVKNGEIEQRQQIHTPRENVVEGMHQALGKLLADYEGQFDYVAVASTGIINNGILSALNPKNLGGLAEFPLKASIAKHTDKPIGLLNDAQAATYAEYQLQNFEQVSNFVFITVSTGVGGGIVLNQILQTGSRGIAGHIGHTLADPNGAICGCGRRGCVEAIASGRAIEAVSSQWEDPCDPKEVFERFRKNDEKATALVERSAKAIANLIADLVISLDIQKIAIGGSVGLAEGYLSLVEKYLQDFPSIYCCEIETAKFGQDAGLIGAAYWVKDVLLDKPEGTIYG</sequence>
<gene>
    <name evidence="1" type="primary">nanK</name>
    <name type="ordered locus">NTHI0230</name>
</gene>
<dbReference type="EC" id="2.7.1.60" evidence="1"/>
<dbReference type="EMBL" id="CP000057">
    <property type="protein sequence ID" value="AAX87204.1"/>
    <property type="molecule type" value="Genomic_DNA"/>
</dbReference>
<dbReference type="RefSeq" id="WP_011271901.1">
    <property type="nucleotide sequence ID" value="NC_007146.2"/>
</dbReference>
<dbReference type="PDB" id="6JDB">
    <property type="method" value="X-ray"/>
    <property type="resolution" value="2.65 A"/>
    <property type="chains" value="A=1-291"/>
</dbReference>
<dbReference type="PDB" id="6JDC">
    <property type="method" value="X-ray"/>
    <property type="resolution" value="2.27 A"/>
    <property type="chains" value="A=1-290"/>
</dbReference>
<dbReference type="PDBsum" id="6JDB"/>
<dbReference type="PDBsum" id="6JDC"/>
<dbReference type="SMR" id="Q4QP43"/>
<dbReference type="KEGG" id="hit:NTHI0230"/>
<dbReference type="HOGENOM" id="CLU_036604_0_4_6"/>
<dbReference type="UniPathway" id="UPA00629">
    <property type="reaction ID" value="UER00681"/>
</dbReference>
<dbReference type="Proteomes" id="UP000002525">
    <property type="component" value="Chromosome"/>
</dbReference>
<dbReference type="GO" id="GO:0005524">
    <property type="term" value="F:ATP binding"/>
    <property type="evidence" value="ECO:0007669"/>
    <property type="project" value="UniProtKB-UniRule"/>
</dbReference>
<dbReference type="GO" id="GO:0009384">
    <property type="term" value="F:N-acylmannosamine kinase activity"/>
    <property type="evidence" value="ECO:0007669"/>
    <property type="project" value="UniProtKB-UniRule"/>
</dbReference>
<dbReference type="GO" id="GO:0008270">
    <property type="term" value="F:zinc ion binding"/>
    <property type="evidence" value="ECO:0007669"/>
    <property type="project" value="UniProtKB-UniRule"/>
</dbReference>
<dbReference type="GO" id="GO:0019262">
    <property type="term" value="P:N-acetylneuraminate catabolic process"/>
    <property type="evidence" value="ECO:0007669"/>
    <property type="project" value="UniProtKB-UniRule"/>
</dbReference>
<dbReference type="CDD" id="cd24069">
    <property type="entry name" value="ASKHA_NBD_ROK_EcNanK-like"/>
    <property type="match status" value="1"/>
</dbReference>
<dbReference type="FunFam" id="3.30.420.40:FF:000063">
    <property type="entry name" value="N-acetylmannosamine kinase"/>
    <property type="match status" value="1"/>
</dbReference>
<dbReference type="Gene3D" id="3.30.420.40">
    <property type="match status" value="2"/>
</dbReference>
<dbReference type="HAMAP" id="MF_01234">
    <property type="entry name" value="ManNAc_kinase"/>
    <property type="match status" value="1"/>
</dbReference>
<dbReference type="InterPro" id="IPR043129">
    <property type="entry name" value="ATPase_NBD"/>
</dbReference>
<dbReference type="InterPro" id="IPR023945">
    <property type="entry name" value="ManNAc_kinase_bac"/>
</dbReference>
<dbReference type="InterPro" id="IPR000600">
    <property type="entry name" value="ROK"/>
</dbReference>
<dbReference type="InterPro" id="IPR049874">
    <property type="entry name" value="ROK_cs"/>
</dbReference>
<dbReference type="NCBIfam" id="NF003461">
    <property type="entry name" value="PRK05082.1"/>
    <property type="match status" value="1"/>
</dbReference>
<dbReference type="PANTHER" id="PTHR18964:SF169">
    <property type="entry name" value="N-ACETYLMANNOSAMINE KINASE"/>
    <property type="match status" value="1"/>
</dbReference>
<dbReference type="PANTHER" id="PTHR18964">
    <property type="entry name" value="ROK (REPRESSOR, ORF, KINASE) FAMILY"/>
    <property type="match status" value="1"/>
</dbReference>
<dbReference type="Pfam" id="PF00480">
    <property type="entry name" value="ROK"/>
    <property type="match status" value="1"/>
</dbReference>
<dbReference type="SUPFAM" id="SSF53067">
    <property type="entry name" value="Actin-like ATPase domain"/>
    <property type="match status" value="1"/>
</dbReference>
<dbReference type="PROSITE" id="PS01125">
    <property type="entry name" value="ROK"/>
    <property type="match status" value="1"/>
</dbReference>
<protein>
    <recommendedName>
        <fullName evidence="1">N-acetylmannosamine kinase</fullName>
        <ecNumber evidence="1">2.7.1.60</ecNumber>
    </recommendedName>
    <alternativeName>
        <fullName evidence="1">ManNAc kinase</fullName>
    </alternativeName>
    <alternativeName>
        <fullName evidence="1">N-acetyl-D-mannosamine kinase</fullName>
    </alternativeName>
</protein>
<feature type="chain" id="PRO_0000301459" description="N-acetylmannosamine kinase">
    <location>
        <begin position="1"/>
        <end position="300"/>
    </location>
</feature>
<feature type="binding site" evidence="1">
    <location>
        <begin position="5"/>
        <end position="12"/>
    </location>
    <ligand>
        <name>ATP</name>
        <dbReference type="ChEBI" id="CHEBI:30616"/>
    </ligand>
</feature>
<feature type="binding site" evidence="1">
    <location>
        <begin position="132"/>
        <end position="139"/>
    </location>
    <ligand>
        <name>ATP</name>
        <dbReference type="ChEBI" id="CHEBI:30616"/>
    </ligand>
</feature>
<feature type="binding site" evidence="1">
    <location>
        <position position="156"/>
    </location>
    <ligand>
        <name>Zn(2+)</name>
        <dbReference type="ChEBI" id="CHEBI:29105"/>
    </ligand>
</feature>
<feature type="binding site" evidence="1">
    <location>
        <position position="166"/>
    </location>
    <ligand>
        <name>Zn(2+)</name>
        <dbReference type="ChEBI" id="CHEBI:29105"/>
    </ligand>
</feature>
<feature type="binding site" evidence="1">
    <location>
        <position position="168"/>
    </location>
    <ligand>
        <name>Zn(2+)</name>
        <dbReference type="ChEBI" id="CHEBI:29105"/>
    </ligand>
</feature>
<feature type="binding site" evidence="1">
    <location>
        <position position="173"/>
    </location>
    <ligand>
        <name>Zn(2+)</name>
        <dbReference type="ChEBI" id="CHEBI:29105"/>
    </ligand>
</feature>
<feature type="strand" evidence="3">
    <location>
        <begin position="2"/>
        <end position="8"/>
    </location>
</feature>
<feature type="strand" evidence="3">
    <location>
        <begin position="10"/>
        <end position="19"/>
    </location>
</feature>
<feature type="strand" evidence="3">
    <location>
        <begin position="27"/>
        <end position="30"/>
    </location>
</feature>
<feature type="strand" evidence="3">
    <location>
        <begin position="33"/>
        <end position="35"/>
    </location>
</feature>
<feature type="helix" evidence="3">
    <location>
        <begin position="36"/>
        <end position="50"/>
    </location>
</feature>
<feature type="turn" evidence="3">
    <location>
        <begin position="51"/>
        <end position="53"/>
    </location>
</feature>
<feature type="strand" evidence="3">
    <location>
        <begin position="56"/>
        <end position="67"/>
    </location>
</feature>
<feature type="strand" evidence="3">
    <location>
        <begin position="70"/>
        <end position="72"/>
    </location>
</feature>
<feature type="helix" evidence="3">
    <location>
        <begin position="76"/>
        <end position="79"/>
    </location>
</feature>
<feature type="strand" evidence="2">
    <location>
        <begin position="84"/>
        <end position="86"/>
    </location>
</feature>
<feature type="helix" evidence="3">
    <location>
        <begin position="87"/>
        <end position="92"/>
    </location>
</feature>
<feature type="strand" evidence="3">
    <location>
        <begin position="99"/>
        <end position="103"/>
    </location>
</feature>
<feature type="helix" evidence="3">
    <location>
        <begin position="104"/>
        <end position="114"/>
    </location>
</feature>
<feature type="turn" evidence="3">
    <location>
        <begin position="118"/>
        <end position="120"/>
    </location>
</feature>
<feature type="strand" evidence="3">
    <location>
        <begin position="123"/>
        <end position="139"/>
    </location>
</feature>
<feature type="strand" evidence="2">
    <location>
        <begin position="142"/>
        <end position="144"/>
    </location>
</feature>
<feature type="strand" evidence="3">
    <location>
        <begin position="147"/>
        <end position="149"/>
    </location>
</feature>
<feature type="helix" evidence="3">
    <location>
        <begin position="154"/>
        <end position="156"/>
    </location>
</feature>
<feature type="strand" evidence="3">
    <location>
        <begin position="157"/>
        <end position="159"/>
    </location>
</feature>
<feature type="strand" evidence="3">
    <location>
        <begin position="171"/>
        <end position="173"/>
    </location>
</feature>
<feature type="helix" evidence="3">
    <location>
        <begin position="174"/>
        <end position="178"/>
    </location>
</feature>
<feature type="helix" evidence="3">
    <location>
        <begin position="180"/>
        <end position="184"/>
    </location>
</feature>
<feature type="strand" evidence="2">
    <location>
        <begin position="188"/>
        <end position="192"/>
    </location>
</feature>
<feature type="helix" evidence="2">
    <location>
        <begin position="196"/>
        <end position="204"/>
    </location>
</feature>
<feature type="helix" evidence="3">
    <location>
        <begin position="211"/>
        <end position="232"/>
    </location>
</feature>
<feature type="strand" evidence="3">
    <location>
        <begin position="236"/>
        <end position="240"/>
    </location>
</feature>
<feature type="helix" evidence="3">
    <location>
        <begin position="241"/>
        <end position="244"/>
    </location>
</feature>
<feature type="helix" evidence="3">
    <location>
        <begin position="249"/>
        <end position="257"/>
    </location>
</feature>
<feature type="helix" evidence="3">
    <location>
        <begin position="262"/>
        <end position="264"/>
    </location>
</feature>
<feature type="strand" evidence="3">
    <location>
        <begin position="267"/>
        <end position="270"/>
    </location>
</feature>
<feature type="helix" evidence="3">
    <location>
        <begin position="274"/>
        <end position="276"/>
    </location>
</feature>
<feature type="helix" evidence="3">
    <location>
        <begin position="277"/>
        <end position="288"/>
    </location>
</feature>
<organism>
    <name type="scientific">Haemophilus influenzae (strain 86-028NP)</name>
    <dbReference type="NCBI Taxonomy" id="281310"/>
    <lineage>
        <taxon>Bacteria</taxon>
        <taxon>Pseudomonadati</taxon>
        <taxon>Pseudomonadota</taxon>
        <taxon>Gammaproteobacteria</taxon>
        <taxon>Pasteurellales</taxon>
        <taxon>Pasteurellaceae</taxon>
        <taxon>Haemophilus</taxon>
    </lineage>
</organism>
<name>NANK_HAEI8</name>
<proteinExistence type="evidence at protein level"/>
<comment type="function">
    <text evidence="1">Catalyzes the phosphorylation of N-acetylmannosamine (ManNAc) to ManNAc-6-P.</text>
</comment>
<comment type="catalytic activity">
    <reaction evidence="1">
        <text>an N-acyl-D-mannosamine + ATP = an N-acyl-D-mannosamine 6-phosphate + ADP + H(+)</text>
        <dbReference type="Rhea" id="RHEA:23832"/>
        <dbReference type="ChEBI" id="CHEBI:15378"/>
        <dbReference type="ChEBI" id="CHEBI:16062"/>
        <dbReference type="ChEBI" id="CHEBI:30616"/>
        <dbReference type="ChEBI" id="CHEBI:57666"/>
        <dbReference type="ChEBI" id="CHEBI:456216"/>
        <dbReference type="EC" id="2.7.1.60"/>
    </reaction>
</comment>
<comment type="pathway">
    <text evidence="1">Amino-sugar metabolism; N-acetylneuraminate degradation; D-fructose 6-phosphate from N-acetylneuraminate: step 2/5.</text>
</comment>
<comment type="subunit">
    <text evidence="1">Homodimer.</text>
</comment>
<comment type="similarity">
    <text evidence="1">Belongs to the ROK (NagC/XylR) family. NanK subfamily.</text>
</comment>